<dbReference type="EC" id="2.4.1.227" evidence="1"/>
<dbReference type="EMBL" id="AP006861">
    <property type="protein sequence ID" value="BAE80924.1"/>
    <property type="molecule type" value="Genomic_DNA"/>
</dbReference>
<dbReference type="SMR" id="Q255W4"/>
<dbReference type="STRING" id="264202.CF0152"/>
<dbReference type="CAZy" id="GT28">
    <property type="family name" value="Glycosyltransferase Family 28"/>
</dbReference>
<dbReference type="KEGG" id="cfe:CF0152"/>
<dbReference type="eggNOG" id="COG0707">
    <property type="taxonomic scope" value="Bacteria"/>
</dbReference>
<dbReference type="HOGENOM" id="CLU_037404_0_1_0"/>
<dbReference type="UniPathway" id="UPA00219"/>
<dbReference type="Proteomes" id="UP000001260">
    <property type="component" value="Chromosome"/>
</dbReference>
<dbReference type="GO" id="GO:0005886">
    <property type="term" value="C:plasma membrane"/>
    <property type="evidence" value="ECO:0007669"/>
    <property type="project" value="UniProtKB-SubCell"/>
</dbReference>
<dbReference type="GO" id="GO:0051991">
    <property type="term" value="F:UDP-N-acetyl-D-glucosamine:N-acetylmuramoyl-L-alanyl-D-glutamyl-meso-2,6-diaminopimelyl-D-alanyl-D-alanine-diphosphoundecaprenol 4-beta-N-acetylglucosaminlytransferase activity"/>
    <property type="evidence" value="ECO:0007669"/>
    <property type="project" value="RHEA"/>
</dbReference>
<dbReference type="GO" id="GO:0050511">
    <property type="term" value="F:undecaprenyldiphospho-muramoylpentapeptide beta-N-acetylglucosaminyltransferase activity"/>
    <property type="evidence" value="ECO:0007669"/>
    <property type="project" value="UniProtKB-UniRule"/>
</dbReference>
<dbReference type="GO" id="GO:0005975">
    <property type="term" value="P:carbohydrate metabolic process"/>
    <property type="evidence" value="ECO:0007669"/>
    <property type="project" value="InterPro"/>
</dbReference>
<dbReference type="GO" id="GO:0051301">
    <property type="term" value="P:cell division"/>
    <property type="evidence" value="ECO:0007669"/>
    <property type="project" value="UniProtKB-KW"/>
</dbReference>
<dbReference type="GO" id="GO:0071555">
    <property type="term" value="P:cell wall organization"/>
    <property type="evidence" value="ECO:0007669"/>
    <property type="project" value="UniProtKB-KW"/>
</dbReference>
<dbReference type="GO" id="GO:0030259">
    <property type="term" value="P:lipid glycosylation"/>
    <property type="evidence" value="ECO:0007669"/>
    <property type="project" value="UniProtKB-UniRule"/>
</dbReference>
<dbReference type="GO" id="GO:0009252">
    <property type="term" value="P:peptidoglycan biosynthetic process"/>
    <property type="evidence" value="ECO:0007669"/>
    <property type="project" value="UniProtKB-UniRule"/>
</dbReference>
<dbReference type="GO" id="GO:0008360">
    <property type="term" value="P:regulation of cell shape"/>
    <property type="evidence" value="ECO:0007669"/>
    <property type="project" value="UniProtKB-KW"/>
</dbReference>
<dbReference type="CDD" id="cd03785">
    <property type="entry name" value="GT28_MurG"/>
    <property type="match status" value="1"/>
</dbReference>
<dbReference type="Gene3D" id="3.40.50.2000">
    <property type="entry name" value="Glycogen Phosphorylase B"/>
    <property type="match status" value="2"/>
</dbReference>
<dbReference type="HAMAP" id="MF_00033">
    <property type="entry name" value="MurG"/>
    <property type="match status" value="1"/>
</dbReference>
<dbReference type="InterPro" id="IPR006009">
    <property type="entry name" value="GlcNAc_MurG"/>
</dbReference>
<dbReference type="InterPro" id="IPR007235">
    <property type="entry name" value="Glyco_trans_28_C"/>
</dbReference>
<dbReference type="InterPro" id="IPR004276">
    <property type="entry name" value="GlycoTrans_28_N"/>
</dbReference>
<dbReference type="NCBIfam" id="TIGR01133">
    <property type="entry name" value="murG"/>
    <property type="match status" value="1"/>
</dbReference>
<dbReference type="PANTHER" id="PTHR21015:SF22">
    <property type="entry name" value="GLYCOSYLTRANSFERASE"/>
    <property type="match status" value="1"/>
</dbReference>
<dbReference type="PANTHER" id="PTHR21015">
    <property type="entry name" value="UDP-N-ACETYLGLUCOSAMINE--N-ACETYLMURAMYL-(PENTAPEPTIDE) PYROPHOSPHORYL-UNDECAPRENOL N-ACETYLGLUCOSAMINE TRANSFERASE 1"/>
    <property type="match status" value="1"/>
</dbReference>
<dbReference type="Pfam" id="PF04101">
    <property type="entry name" value="Glyco_tran_28_C"/>
    <property type="match status" value="1"/>
</dbReference>
<dbReference type="Pfam" id="PF03033">
    <property type="entry name" value="Glyco_transf_28"/>
    <property type="match status" value="1"/>
</dbReference>
<dbReference type="SUPFAM" id="SSF53756">
    <property type="entry name" value="UDP-Glycosyltransferase/glycogen phosphorylase"/>
    <property type="match status" value="1"/>
</dbReference>
<feature type="chain" id="PRO_0000315083" description="UDP-N-acetylglucosamine--N-acetylmuramyl-(pentapeptide) pyrophosphoryl-undecaprenol N-acetylglucosamine transferase">
    <location>
        <begin position="1"/>
        <end position="357"/>
    </location>
</feature>
<feature type="binding site" evidence="1">
    <location>
        <begin position="14"/>
        <end position="16"/>
    </location>
    <ligand>
        <name>UDP-N-acetyl-alpha-D-glucosamine</name>
        <dbReference type="ChEBI" id="CHEBI:57705"/>
    </ligand>
</feature>
<feature type="binding site" evidence="1">
    <location>
        <position position="125"/>
    </location>
    <ligand>
        <name>UDP-N-acetyl-alpha-D-glucosamine</name>
        <dbReference type="ChEBI" id="CHEBI:57705"/>
    </ligand>
</feature>
<feature type="binding site" evidence="1">
    <location>
        <position position="190"/>
    </location>
    <ligand>
        <name>UDP-N-acetyl-alpha-D-glucosamine</name>
        <dbReference type="ChEBI" id="CHEBI:57705"/>
    </ligand>
</feature>
<feature type="binding site" evidence="1">
    <location>
        <position position="290"/>
    </location>
    <ligand>
        <name>UDP-N-acetyl-alpha-D-glucosamine</name>
        <dbReference type="ChEBI" id="CHEBI:57705"/>
    </ligand>
</feature>
<name>MURG_CHLFF</name>
<keyword id="KW-0131">Cell cycle</keyword>
<keyword id="KW-0132">Cell division</keyword>
<keyword id="KW-0997">Cell inner membrane</keyword>
<keyword id="KW-1003">Cell membrane</keyword>
<keyword id="KW-0133">Cell shape</keyword>
<keyword id="KW-0961">Cell wall biogenesis/degradation</keyword>
<keyword id="KW-0328">Glycosyltransferase</keyword>
<keyword id="KW-0472">Membrane</keyword>
<keyword id="KW-0573">Peptidoglycan synthesis</keyword>
<keyword id="KW-0808">Transferase</keyword>
<proteinExistence type="inferred from homology"/>
<organism>
    <name type="scientific">Chlamydia felis (strain Fe/C-56)</name>
    <name type="common">Chlamydophila felis</name>
    <dbReference type="NCBI Taxonomy" id="264202"/>
    <lineage>
        <taxon>Bacteria</taxon>
        <taxon>Pseudomonadati</taxon>
        <taxon>Chlamydiota</taxon>
        <taxon>Chlamydiia</taxon>
        <taxon>Chlamydiales</taxon>
        <taxon>Chlamydiaceae</taxon>
        <taxon>Chlamydia/Chlamydophila group</taxon>
        <taxon>Chlamydia</taxon>
    </lineage>
</organism>
<sequence>MKKINKIALAVGGSGGHIVPALATRETFCKEGIDVLLLGKGLDNYPNLCEQDIPYREIPSGSLSISRPIAAIRNTRSLYIGYKKAKKELIAFGPDVVIGFGSYHSLPVLMAALKKKIPIFLHEQNLVPGKVNKLFSRFAKGVGVSFSPVTKQFSCPAQEVFLPKRVWASSNSSKELSSSYSPIICVVGGSQGAKTLNDNVPPALVKVAKDYPNMYVHHIAGPKGEVASIQYVYSRGGVSFCVKHFEHDMLNILLSSDLVISRAGATILDELLWAQTPSILIPYPGAYGHQEENAKFLVYTIGGGSMILEKQLSNEVLTKNILLALDSKTIKNRREALRAYYQNKSSKSFYQFICECL</sequence>
<reference key="1">
    <citation type="journal article" date="2006" name="DNA Res.">
        <title>Genome sequence of the cat pathogen, Chlamydophila felis.</title>
        <authorList>
            <person name="Azuma Y."/>
            <person name="Hirakawa H."/>
            <person name="Yamashita A."/>
            <person name="Cai Y."/>
            <person name="Rahman M.A."/>
            <person name="Suzuki H."/>
            <person name="Mitaku S."/>
            <person name="Toh H."/>
            <person name="Goto S."/>
            <person name="Murakami T."/>
            <person name="Sugi K."/>
            <person name="Hayashi H."/>
            <person name="Fukushi H."/>
            <person name="Hattori M."/>
            <person name="Kuhara S."/>
            <person name="Shirai M."/>
        </authorList>
    </citation>
    <scope>NUCLEOTIDE SEQUENCE [LARGE SCALE GENOMIC DNA]</scope>
    <source>
        <strain>Fe/C-56</strain>
    </source>
</reference>
<comment type="function">
    <text evidence="1">Cell wall formation. Catalyzes the transfer of a GlcNAc subunit on undecaprenyl-pyrophosphoryl-MurNAc-pentapeptide (lipid intermediate I) to form undecaprenyl-pyrophosphoryl-MurNAc-(pentapeptide)GlcNAc (lipid intermediate II).</text>
</comment>
<comment type="catalytic activity">
    <reaction evidence="1">
        <text>di-trans,octa-cis-undecaprenyl diphospho-N-acetyl-alpha-D-muramoyl-L-alanyl-D-glutamyl-meso-2,6-diaminopimeloyl-D-alanyl-D-alanine + UDP-N-acetyl-alpha-D-glucosamine = di-trans,octa-cis-undecaprenyl diphospho-[N-acetyl-alpha-D-glucosaminyl-(1-&gt;4)]-N-acetyl-alpha-D-muramoyl-L-alanyl-D-glutamyl-meso-2,6-diaminopimeloyl-D-alanyl-D-alanine + UDP + H(+)</text>
        <dbReference type="Rhea" id="RHEA:31227"/>
        <dbReference type="ChEBI" id="CHEBI:15378"/>
        <dbReference type="ChEBI" id="CHEBI:57705"/>
        <dbReference type="ChEBI" id="CHEBI:58223"/>
        <dbReference type="ChEBI" id="CHEBI:61387"/>
        <dbReference type="ChEBI" id="CHEBI:61388"/>
        <dbReference type="EC" id="2.4.1.227"/>
    </reaction>
</comment>
<comment type="pathway">
    <text evidence="1">Cell wall biogenesis; peptidoglycan biosynthesis.</text>
</comment>
<comment type="subcellular location">
    <subcellularLocation>
        <location evidence="1">Cell inner membrane</location>
        <topology evidence="1">Peripheral membrane protein</topology>
        <orientation evidence="1">Cytoplasmic side</orientation>
    </subcellularLocation>
</comment>
<comment type="similarity">
    <text evidence="1">Belongs to the glycosyltransferase 28 family. MurG subfamily.</text>
</comment>
<evidence type="ECO:0000255" key="1">
    <source>
        <dbReference type="HAMAP-Rule" id="MF_00033"/>
    </source>
</evidence>
<gene>
    <name evidence="1" type="primary">murG</name>
    <name type="ordered locus">CF0152</name>
</gene>
<accession>Q255W4</accession>
<protein>
    <recommendedName>
        <fullName evidence="1">UDP-N-acetylglucosamine--N-acetylmuramyl-(pentapeptide) pyrophosphoryl-undecaprenol N-acetylglucosamine transferase</fullName>
        <ecNumber evidence="1">2.4.1.227</ecNumber>
    </recommendedName>
    <alternativeName>
        <fullName evidence="1">Undecaprenyl-PP-MurNAc-pentapeptide-UDPGlcNAc GlcNAc transferase</fullName>
    </alternativeName>
</protein>